<keyword id="KW-0297">G-protein coupled receptor</keyword>
<keyword id="KW-0325">Glycoprotein</keyword>
<keyword id="KW-0472">Membrane</keyword>
<keyword id="KW-0675">Receptor</keyword>
<keyword id="KW-1185">Reference proteome</keyword>
<keyword id="KW-0716">Sensory transduction</keyword>
<keyword id="KW-0919">Taste</keyword>
<keyword id="KW-0807">Transducer</keyword>
<keyword id="KW-0812">Transmembrane</keyword>
<keyword id="KW-1133">Transmembrane helix</keyword>
<dbReference type="EMBL" id="AY566402">
    <property type="protein sequence ID" value="AAS67622.1"/>
    <property type="molecule type" value="Genomic_DNA"/>
</dbReference>
<dbReference type="EMBL" id="AY724895">
    <property type="protein sequence ID" value="AAU21111.1"/>
    <property type="molecule type" value="Genomic_DNA"/>
</dbReference>
<dbReference type="RefSeq" id="NP_001009139.1">
    <property type="nucleotide sequence ID" value="NM_001009139.1"/>
</dbReference>
<dbReference type="SMR" id="Q697L5"/>
<dbReference type="FunCoup" id="Q697L5">
    <property type="interactions" value="251"/>
</dbReference>
<dbReference type="STRING" id="9598.ENSPTRP00000054257"/>
<dbReference type="GlyCosmos" id="Q697L5">
    <property type="glycosylation" value="1 site, No reported glycans"/>
</dbReference>
<dbReference type="PaxDb" id="9598-ENSPTRP00000054257"/>
<dbReference type="Ensembl" id="ENSPTRT00000061714.2">
    <property type="protein sequence ID" value="ENSPTRP00000054257.2"/>
    <property type="gene ID" value="ENSPTRG00000019785.4"/>
</dbReference>
<dbReference type="Ensembl" id="ENSPTRT00000100975.1">
    <property type="protein sequence ID" value="ENSPTRP00000087620.1"/>
    <property type="gene ID" value="ENSPTRG00000045865.1"/>
</dbReference>
<dbReference type="GeneID" id="493889"/>
<dbReference type="KEGG" id="ptr:493889"/>
<dbReference type="CTD" id="5726"/>
<dbReference type="VGNC" id="VGNC:8771">
    <property type="gene designation" value="TAS2R38"/>
</dbReference>
<dbReference type="eggNOG" id="ENOG502T15G">
    <property type="taxonomic scope" value="Eukaryota"/>
</dbReference>
<dbReference type="GeneTree" id="ENSGT01100000263477"/>
<dbReference type="InParanoid" id="Q697L5"/>
<dbReference type="OMA" id="TIIMLWM"/>
<dbReference type="Proteomes" id="UP000002277">
    <property type="component" value="Chromosome 7"/>
</dbReference>
<dbReference type="GO" id="GO:0016020">
    <property type="term" value="C:membrane"/>
    <property type="evidence" value="ECO:0000318"/>
    <property type="project" value="GO_Central"/>
</dbReference>
<dbReference type="GO" id="GO:0005886">
    <property type="term" value="C:plasma membrane"/>
    <property type="evidence" value="ECO:0007669"/>
    <property type="project" value="UniProtKB-ARBA"/>
</dbReference>
<dbReference type="GO" id="GO:0033038">
    <property type="term" value="F:bitter taste receptor activity"/>
    <property type="evidence" value="ECO:0000318"/>
    <property type="project" value="GO_Central"/>
</dbReference>
<dbReference type="GO" id="GO:0004930">
    <property type="term" value="F:G protein-coupled receptor activity"/>
    <property type="evidence" value="ECO:0007669"/>
    <property type="project" value="UniProtKB-KW"/>
</dbReference>
<dbReference type="GO" id="GO:0001580">
    <property type="term" value="P:detection of chemical stimulus involved in sensory perception of bitter taste"/>
    <property type="evidence" value="ECO:0000318"/>
    <property type="project" value="GO_Central"/>
</dbReference>
<dbReference type="CDD" id="cd15025">
    <property type="entry name" value="7tm_TAS2R38"/>
    <property type="match status" value="1"/>
</dbReference>
<dbReference type="FunFam" id="1.20.1070.10:FF:000055">
    <property type="entry name" value="Taste receptor type 2"/>
    <property type="match status" value="1"/>
</dbReference>
<dbReference type="Gene3D" id="1.20.1070.10">
    <property type="entry name" value="Rhodopsin 7-helix transmembrane proteins"/>
    <property type="match status" value="1"/>
</dbReference>
<dbReference type="InterPro" id="IPR007960">
    <property type="entry name" value="TAS2R"/>
</dbReference>
<dbReference type="InterPro" id="IPR030050">
    <property type="entry name" value="TAS2R38"/>
</dbReference>
<dbReference type="PANTHER" id="PTHR11394">
    <property type="entry name" value="TASTE RECEPTOR TYPE 2"/>
    <property type="match status" value="1"/>
</dbReference>
<dbReference type="PANTHER" id="PTHR11394:SF52">
    <property type="entry name" value="TASTE RECEPTOR TYPE 2 MEMBER 38"/>
    <property type="match status" value="1"/>
</dbReference>
<dbReference type="Pfam" id="PF05296">
    <property type="entry name" value="TAS2R"/>
    <property type="match status" value="1"/>
</dbReference>
<dbReference type="SUPFAM" id="SSF81321">
    <property type="entry name" value="Family A G protein-coupled receptor-like"/>
    <property type="match status" value="1"/>
</dbReference>
<sequence length="333" mass="37856">MLTLTRIHTVSYEVRSTFLFISVLEFAVGFLTNAFVFLVNFWDVVKRQPLSNSDCVLLCLSISRLFLHGLLFLSAIQLTHFQKLSEPLNHSYQAIIMLWMIANQANLWLAACLSLLYCSKLIRFSHTFLICLASWVSRKISQMLLGIILCSCICTVLCVWCFFSRPHFTVTTVLFMNNNTRLNWQIKDLNLFYSFLFCYLWSVPPFLLFLVSSGMLTVSLGRHMRTMKVYTRDSRDPSLEAHIKALKSLVSFFCFFVISSCAAFISVPLLILWRDKIGVMVCVGIMAACPSGHAAVLISGNAKLRRAVTTILLWAQSSLKVRADHKADSRTLC</sequence>
<accession>Q697L5</accession>
<accession>Q646A8</accession>
<gene>
    <name type="primary">TAS2R38</name>
</gene>
<feature type="chain" id="PRO_0000082276" description="Taste receptor type 2 member 38">
    <location>
        <begin position="1"/>
        <end position="333"/>
    </location>
</feature>
<feature type="topological domain" description="Extracellular" evidence="2">
    <location>
        <begin position="1"/>
        <end position="17"/>
    </location>
</feature>
<feature type="transmembrane region" description="Helical; Name=1" evidence="2">
    <location>
        <begin position="18"/>
        <end position="38"/>
    </location>
</feature>
<feature type="topological domain" description="Cytoplasmic" evidence="2">
    <location>
        <begin position="39"/>
        <end position="55"/>
    </location>
</feature>
<feature type="transmembrane region" description="Helical; Name=2" evidence="2">
    <location>
        <begin position="56"/>
        <end position="76"/>
    </location>
</feature>
<feature type="topological domain" description="Extracellular" evidence="2">
    <location>
        <begin position="77"/>
        <end position="94"/>
    </location>
</feature>
<feature type="transmembrane region" description="Helical; Name=3" evidence="2">
    <location>
        <begin position="95"/>
        <end position="115"/>
    </location>
</feature>
<feature type="topological domain" description="Cytoplasmic" evidence="2">
    <location>
        <begin position="116"/>
        <end position="142"/>
    </location>
</feature>
<feature type="transmembrane region" description="Helical; Name=4" evidence="2">
    <location>
        <begin position="143"/>
        <end position="163"/>
    </location>
</feature>
<feature type="topological domain" description="Extracellular" evidence="2">
    <location>
        <begin position="164"/>
        <end position="190"/>
    </location>
</feature>
<feature type="transmembrane region" description="Helical; Name=5" evidence="2">
    <location>
        <begin position="191"/>
        <end position="211"/>
    </location>
</feature>
<feature type="topological domain" description="Cytoplasmic" evidence="2">
    <location>
        <begin position="212"/>
        <end position="251"/>
    </location>
</feature>
<feature type="transmembrane region" description="Helical; Name=6" evidence="2">
    <location>
        <begin position="252"/>
        <end position="272"/>
    </location>
</feature>
<feature type="topological domain" description="Extracellular" evidence="2">
    <location>
        <begin position="273"/>
        <end position="276"/>
    </location>
</feature>
<feature type="transmembrane region" description="Helical; Name=7" evidence="2">
    <location>
        <begin position="277"/>
        <end position="297"/>
    </location>
</feature>
<feature type="topological domain" description="Cytoplasmic" evidence="2">
    <location>
        <begin position="298"/>
        <end position="333"/>
    </location>
</feature>
<feature type="glycosylation site" description="N-linked (GlcNAc...) asparagine" evidence="2">
    <location>
        <position position="178"/>
    </location>
</feature>
<comment type="function">
    <text evidence="1">Receptor that may play a role in the perception of bitterness and is gustducin-linked. May play a role in sensing the chemical composition of the gastrointestinal content. The activity of this receptor may stimulate alpha gustducin, mediate PLC-beta-2 activation and lead to the gating of TRPM5 (By similarity).</text>
</comment>
<comment type="subcellular location">
    <subcellularLocation>
        <location>Membrane</location>
        <topology>Multi-pass membrane protein</topology>
    </subcellularLocation>
</comment>
<comment type="miscellaneous">
    <text>Most taste cells may be activated by a limited number of bitter compounds; individual taste cells can discriminate among bitter stimuli.</text>
</comment>
<comment type="similarity">
    <text evidence="3">Belongs to the G-protein coupled receptor T2R family.</text>
</comment>
<reference key="1">
    <citation type="submission" date="2004-03" db="EMBL/GenBank/DDBJ databases">
        <title>A global survey of haplotype frequencies for the TAS2R38 (PTC) gene.</title>
        <authorList>
            <person name="Davidson A.C."/>
            <person name="Pakstis A.J."/>
            <person name="Speed W.C."/>
            <person name="Odunsi A."/>
            <person name="Okonafua F."/>
            <person name="Kajuna S.L.J."/>
            <person name="Kungulilo S.V."/>
            <person name="Friedlaender J."/>
            <person name="Lu R.-B."/>
            <person name="Grigorenko E.L."/>
            <person name="Zhukova O.V."/>
            <person name="Schultz L.O."/>
            <person name="Bonne-Tamir B."/>
            <person name="Duffy V."/>
            <person name="Bartoshuk L."/>
            <person name="Kidd K.K."/>
            <person name="Kidd J.R."/>
        </authorList>
    </citation>
    <scope>NUCLEOTIDE SEQUENCE [GENOMIC DNA]</scope>
</reference>
<reference key="2">
    <citation type="journal article" date="2005" name="Mol. Biol. Evol.">
        <title>Evolution of bitter taste receptors in humans and apes.</title>
        <authorList>
            <person name="Fischer A."/>
            <person name="Gilad Y."/>
            <person name="Man O."/>
            <person name="Paeaebo S."/>
        </authorList>
    </citation>
    <scope>NUCLEOTIDE SEQUENCE [GENOMIC DNA]</scope>
</reference>
<proteinExistence type="inferred from homology"/>
<name>T2R38_PANTR</name>
<organism>
    <name type="scientific">Pan troglodytes</name>
    <name type="common">Chimpanzee</name>
    <dbReference type="NCBI Taxonomy" id="9598"/>
    <lineage>
        <taxon>Eukaryota</taxon>
        <taxon>Metazoa</taxon>
        <taxon>Chordata</taxon>
        <taxon>Craniata</taxon>
        <taxon>Vertebrata</taxon>
        <taxon>Euteleostomi</taxon>
        <taxon>Mammalia</taxon>
        <taxon>Eutheria</taxon>
        <taxon>Euarchontoglires</taxon>
        <taxon>Primates</taxon>
        <taxon>Haplorrhini</taxon>
        <taxon>Catarrhini</taxon>
        <taxon>Hominidae</taxon>
        <taxon>Pan</taxon>
    </lineage>
</organism>
<protein>
    <recommendedName>
        <fullName>Taste receptor type 2 member 38</fullName>
        <shortName>T2R38</shortName>
    </recommendedName>
</protein>
<evidence type="ECO:0000250" key="1"/>
<evidence type="ECO:0000255" key="2"/>
<evidence type="ECO:0000305" key="3"/>